<organism>
    <name type="scientific">Bacillus subtilis (strain 168)</name>
    <dbReference type="NCBI Taxonomy" id="224308"/>
    <lineage>
        <taxon>Bacteria</taxon>
        <taxon>Bacillati</taxon>
        <taxon>Bacillota</taxon>
        <taxon>Bacilli</taxon>
        <taxon>Bacillales</taxon>
        <taxon>Bacillaceae</taxon>
        <taxon>Bacillus</taxon>
    </lineage>
</organism>
<keyword id="KW-1185">Reference proteome</keyword>
<dbReference type="EMBL" id="AL009126">
    <property type="protein sequence ID" value="CAB15169.1"/>
    <property type="molecule type" value="Genomic_DNA"/>
</dbReference>
<dbReference type="PIR" id="D70026">
    <property type="entry name" value="D70026"/>
</dbReference>
<dbReference type="RefSeq" id="NP_391059.1">
    <property type="nucleotide sequence ID" value="NC_000964.3"/>
</dbReference>
<dbReference type="RefSeq" id="WP_003243066.1">
    <property type="nucleotide sequence ID" value="NZ_OZ025638.1"/>
</dbReference>
<dbReference type="FunCoup" id="O32096">
    <property type="interactions" value="49"/>
</dbReference>
<dbReference type="STRING" id="224308.BSU31810"/>
<dbReference type="PaxDb" id="224308-BSU31810"/>
<dbReference type="EnsemblBacteria" id="CAB15169">
    <property type="protein sequence ID" value="CAB15169"/>
    <property type="gene ID" value="BSU_31810"/>
</dbReference>
<dbReference type="GeneID" id="937187"/>
<dbReference type="KEGG" id="bsu:BSU31810"/>
<dbReference type="PATRIC" id="fig|224308.179.peg.3447"/>
<dbReference type="eggNOG" id="ENOG5030DFU">
    <property type="taxonomic scope" value="Bacteria"/>
</dbReference>
<dbReference type="InParanoid" id="O32096"/>
<dbReference type="OrthoDB" id="2890093at2"/>
<dbReference type="BioCyc" id="BSUB:BSU31810-MONOMER"/>
<dbReference type="Proteomes" id="UP000001570">
    <property type="component" value="Chromosome"/>
</dbReference>
<dbReference type="InterPro" id="IPR019270">
    <property type="entry name" value="DUF2283"/>
</dbReference>
<dbReference type="InterPro" id="IPR016789">
    <property type="entry name" value="UCP021389"/>
</dbReference>
<dbReference type="Pfam" id="PF10049">
    <property type="entry name" value="DUF2283"/>
    <property type="match status" value="1"/>
</dbReference>
<dbReference type="PIRSF" id="PIRSF021389">
    <property type="entry name" value="UCP021389"/>
    <property type="match status" value="1"/>
</dbReference>
<reference key="1">
    <citation type="journal article" date="1997" name="Nature">
        <title>The complete genome sequence of the Gram-positive bacterium Bacillus subtilis.</title>
        <authorList>
            <person name="Kunst F."/>
            <person name="Ogasawara N."/>
            <person name="Moszer I."/>
            <person name="Albertini A.M."/>
            <person name="Alloni G."/>
            <person name="Azevedo V."/>
            <person name="Bertero M.G."/>
            <person name="Bessieres P."/>
            <person name="Bolotin A."/>
            <person name="Borchert S."/>
            <person name="Borriss R."/>
            <person name="Boursier L."/>
            <person name="Brans A."/>
            <person name="Braun M."/>
            <person name="Brignell S.C."/>
            <person name="Bron S."/>
            <person name="Brouillet S."/>
            <person name="Bruschi C.V."/>
            <person name="Caldwell B."/>
            <person name="Capuano V."/>
            <person name="Carter N.M."/>
            <person name="Choi S.-K."/>
            <person name="Codani J.-J."/>
            <person name="Connerton I.F."/>
            <person name="Cummings N.J."/>
            <person name="Daniel R.A."/>
            <person name="Denizot F."/>
            <person name="Devine K.M."/>
            <person name="Duesterhoeft A."/>
            <person name="Ehrlich S.D."/>
            <person name="Emmerson P.T."/>
            <person name="Entian K.-D."/>
            <person name="Errington J."/>
            <person name="Fabret C."/>
            <person name="Ferrari E."/>
            <person name="Foulger D."/>
            <person name="Fritz C."/>
            <person name="Fujita M."/>
            <person name="Fujita Y."/>
            <person name="Fuma S."/>
            <person name="Galizzi A."/>
            <person name="Galleron N."/>
            <person name="Ghim S.-Y."/>
            <person name="Glaser P."/>
            <person name="Goffeau A."/>
            <person name="Golightly E.J."/>
            <person name="Grandi G."/>
            <person name="Guiseppi G."/>
            <person name="Guy B.J."/>
            <person name="Haga K."/>
            <person name="Haiech J."/>
            <person name="Harwood C.R."/>
            <person name="Henaut A."/>
            <person name="Hilbert H."/>
            <person name="Holsappel S."/>
            <person name="Hosono S."/>
            <person name="Hullo M.-F."/>
            <person name="Itaya M."/>
            <person name="Jones L.-M."/>
            <person name="Joris B."/>
            <person name="Karamata D."/>
            <person name="Kasahara Y."/>
            <person name="Klaerr-Blanchard M."/>
            <person name="Klein C."/>
            <person name="Kobayashi Y."/>
            <person name="Koetter P."/>
            <person name="Koningstein G."/>
            <person name="Krogh S."/>
            <person name="Kumano M."/>
            <person name="Kurita K."/>
            <person name="Lapidus A."/>
            <person name="Lardinois S."/>
            <person name="Lauber J."/>
            <person name="Lazarevic V."/>
            <person name="Lee S.-M."/>
            <person name="Levine A."/>
            <person name="Liu H."/>
            <person name="Masuda S."/>
            <person name="Mauel C."/>
            <person name="Medigue C."/>
            <person name="Medina N."/>
            <person name="Mellado R.P."/>
            <person name="Mizuno M."/>
            <person name="Moestl D."/>
            <person name="Nakai S."/>
            <person name="Noback M."/>
            <person name="Noone D."/>
            <person name="O'Reilly M."/>
            <person name="Ogawa K."/>
            <person name="Ogiwara A."/>
            <person name="Oudega B."/>
            <person name="Park S.-H."/>
            <person name="Parro V."/>
            <person name="Pohl T.M."/>
            <person name="Portetelle D."/>
            <person name="Porwollik S."/>
            <person name="Prescott A.M."/>
            <person name="Presecan E."/>
            <person name="Pujic P."/>
            <person name="Purnelle B."/>
            <person name="Rapoport G."/>
            <person name="Rey M."/>
            <person name="Reynolds S."/>
            <person name="Rieger M."/>
            <person name="Rivolta C."/>
            <person name="Rocha E."/>
            <person name="Roche B."/>
            <person name="Rose M."/>
            <person name="Sadaie Y."/>
            <person name="Sato T."/>
            <person name="Scanlan E."/>
            <person name="Schleich S."/>
            <person name="Schroeter R."/>
            <person name="Scoffone F."/>
            <person name="Sekiguchi J."/>
            <person name="Sekowska A."/>
            <person name="Seror S.J."/>
            <person name="Serror P."/>
            <person name="Shin B.-S."/>
            <person name="Soldo B."/>
            <person name="Sorokin A."/>
            <person name="Tacconi E."/>
            <person name="Takagi T."/>
            <person name="Takahashi H."/>
            <person name="Takemaru K."/>
            <person name="Takeuchi M."/>
            <person name="Tamakoshi A."/>
            <person name="Tanaka T."/>
            <person name="Terpstra P."/>
            <person name="Tognoni A."/>
            <person name="Tosato V."/>
            <person name="Uchiyama S."/>
            <person name="Vandenbol M."/>
            <person name="Vannier F."/>
            <person name="Vassarotti A."/>
            <person name="Viari A."/>
            <person name="Wambutt R."/>
            <person name="Wedler E."/>
            <person name="Wedler H."/>
            <person name="Weitzenegger T."/>
            <person name="Winters P."/>
            <person name="Wipat A."/>
            <person name="Yamamoto H."/>
            <person name="Yamane K."/>
            <person name="Yasumoto K."/>
            <person name="Yata K."/>
            <person name="Yoshida K."/>
            <person name="Yoshikawa H.-F."/>
            <person name="Zumstein E."/>
            <person name="Yoshikawa H."/>
            <person name="Danchin A."/>
        </authorList>
    </citation>
    <scope>NUCLEOTIDE SEQUENCE [LARGE SCALE GENOMIC DNA]</scope>
    <source>
        <strain>168</strain>
    </source>
</reference>
<sequence>MKAVTYDTDSELAYIYVLPPKKNRNVRTEELRVNDCLLLDISQDGKIAGFECFGEAAHLCAPFAGKSRLYVKDSDGYHFRVCQHASVRSCYTVYRVTFCFSDGDYQEFAGFDLDGTMYHSAFLQRLTEK</sequence>
<accession>O32096</accession>
<name>YUZE_BACSU</name>
<gene>
    <name type="primary">yuzE</name>
    <name type="ordered locus">BSU31810</name>
</gene>
<feature type="chain" id="PRO_0000049931" description="Uncharacterized protein YuzE">
    <location>
        <begin position="1"/>
        <end position="129"/>
    </location>
</feature>
<proteinExistence type="predicted"/>
<protein>
    <recommendedName>
        <fullName>Uncharacterized protein YuzE</fullName>
    </recommendedName>
</protein>